<reference key="1">
    <citation type="journal article" date="1994" name="DNA Res.">
        <title>Prediction of the coding sequences of unidentified human genes. I. The coding sequences of 40 new genes (KIAA0001-KIAA0040) deduced by analysis of randomly sampled cDNA clones from human immature myeloid cell line KG-1.</title>
        <authorList>
            <person name="Nomura N."/>
            <person name="Miyajima N."/>
            <person name="Sazuka T."/>
            <person name="Tanaka A."/>
            <person name="Kawarabayasi Y."/>
            <person name="Sato S."/>
            <person name="Nagase T."/>
            <person name="Seki N."/>
            <person name="Ishikawa K."/>
            <person name="Tabata S."/>
        </authorList>
    </citation>
    <scope>NUCLEOTIDE SEQUENCE [LARGE SCALE MRNA] (ISOFORM 1)</scope>
    <source>
        <tissue>Bone marrow</tissue>
    </source>
</reference>
<reference key="2">
    <citation type="journal article" date="2004" name="Nat. Genet.">
        <title>Complete sequencing and characterization of 21,243 full-length human cDNAs.</title>
        <authorList>
            <person name="Ota T."/>
            <person name="Suzuki Y."/>
            <person name="Nishikawa T."/>
            <person name="Otsuki T."/>
            <person name="Sugiyama T."/>
            <person name="Irie R."/>
            <person name="Wakamatsu A."/>
            <person name="Hayashi K."/>
            <person name="Sato H."/>
            <person name="Nagai K."/>
            <person name="Kimura K."/>
            <person name="Makita H."/>
            <person name="Sekine M."/>
            <person name="Obayashi M."/>
            <person name="Nishi T."/>
            <person name="Shibahara T."/>
            <person name="Tanaka T."/>
            <person name="Ishii S."/>
            <person name="Yamamoto J."/>
            <person name="Saito K."/>
            <person name="Kawai Y."/>
            <person name="Isono Y."/>
            <person name="Nakamura Y."/>
            <person name="Nagahari K."/>
            <person name="Murakami K."/>
            <person name="Yasuda T."/>
            <person name="Iwayanagi T."/>
            <person name="Wagatsuma M."/>
            <person name="Shiratori A."/>
            <person name="Sudo H."/>
            <person name="Hosoiri T."/>
            <person name="Kaku Y."/>
            <person name="Kodaira H."/>
            <person name="Kondo H."/>
            <person name="Sugawara M."/>
            <person name="Takahashi M."/>
            <person name="Kanda K."/>
            <person name="Yokoi T."/>
            <person name="Furuya T."/>
            <person name="Kikkawa E."/>
            <person name="Omura Y."/>
            <person name="Abe K."/>
            <person name="Kamihara K."/>
            <person name="Katsuta N."/>
            <person name="Sato K."/>
            <person name="Tanikawa M."/>
            <person name="Yamazaki M."/>
            <person name="Ninomiya K."/>
            <person name="Ishibashi T."/>
            <person name="Yamashita H."/>
            <person name="Murakawa K."/>
            <person name="Fujimori K."/>
            <person name="Tanai H."/>
            <person name="Kimata M."/>
            <person name="Watanabe M."/>
            <person name="Hiraoka S."/>
            <person name="Chiba Y."/>
            <person name="Ishida S."/>
            <person name="Ono Y."/>
            <person name="Takiguchi S."/>
            <person name="Watanabe S."/>
            <person name="Yosida M."/>
            <person name="Hotuta T."/>
            <person name="Kusano J."/>
            <person name="Kanehori K."/>
            <person name="Takahashi-Fujii A."/>
            <person name="Hara H."/>
            <person name="Tanase T.-O."/>
            <person name="Nomura Y."/>
            <person name="Togiya S."/>
            <person name="Komai F."/>
            <person name="Hara R."/>
            <person name="Takeuchi K."/>
            <person name="Arita M."/>
            <person name="Imose N."/>
            <person name="Musashino K."/>
            <person name="Yuuki H."/>
            <person name="Oshima A."/>
            <person name="Sasaki N."/>
            <person name="Aotsuka S."/>
            <person name="Yoshikawa Y."/>
            <person name="Matsunawa H."/>
            <person name="Ichihara T."/>
            <person name="Shiohata N."/>
            <person name="Sano S."/>
            <person name="Moriya S."/>
            <person name="Momiyama H."/>
            <person name="Satoh N."/>
            <person name="Takami S."/>
            <person name="Terashima Y."/>
            <person name="Suzuki O."/>
            <person name="Nakagawa S."/>
            <person name="Senoh A."/>
            <person name="Mizoguchi H."/>
            <person name="Goto Y."/>
            <person name="Shimizu F."/>
            <person name="Wakebe H."/>
            <person name="Hishigaki H."/>
            <person name="Watanabe T."/>
            <person name="Sugiyama A."/>
            <person name="Takemoto M."/>
            <person name="Kawakami B."/>
            <person name="Yamazaki M."/>
            <person name="Watanabe K."/>
            <person name="Kumagai A."/>
            <person name="Itakura S."/>
            <person name="Fukuzumi Y."/>
            <person name="Fujimori Y."/>
            <person name="Komiyama M."/>
            <person name="Tashiro H."/>
            <person name="Tanigami A."/>
            <person name="Fujiwara T."/>
            <person name="Ono T."/>
            <person name="Yamada K."/>
            <person name="Fujii Y."/>
            <person name="Ozaki K."/>
            <person name="Hirao M."/>
            <person name="Ohmori Y."/>
            <person name="Kawabata A."/>
            <person name="Hikiji T."/>
            <person name="Kobatake N."/>
            <person name="Inagaki H."/>
            <person name="Ikema Y."/>
            <person name="Okamoto S."/>
            <person name="Okitani R."/>
            <person name="Kawakami T."/>
            <person name="Noguchi S."/>
            <person name="Itoh T."/>
            <person name="Shigeta K."/>
            <person name="Senba T."/>
            <person name="Matsumura K."/>
            <person name="Nakajima Y."/>
            <person name="Mizuno T."/>
            <person name="Morinaga M."/>
            <person name="Sasaki M."/>
            <person name="Togashi T."/>
            <person name="Oyama M."/>
            <person name="Hata H."/>
            <person name="Watanabe M."/>
            <person name="Komatsu T."/>
            <person name="Mizushima-Sugano J."/>
            <person name="Satoh T."/>
            <person name="Shirai Y."/>
            <person name="Takahashi Y."/>
            <person name="Nakagawa K."/>
            <person name="Okumura K."/>
            <person name="Nagase T."/>
            <person name="Nomura N."/>
            <person name="Kikuchi H."/>
            <person name="Masuho Y."/>
            <person name="Yamashita R."/>
            <person name="Nakai K."/>
            <person name="Yada T."/>
            <person name="Nakamura Y."/>
            <person name="Ohara O."/>
            <person name="Isogai T."/>
            <person name="Sugano S."/>
        </authorList>
    </citation>
    <scope>NUCLEOTIDE SEQUENCE [LARGE SCALE MRNA] (ISOFORM 3)</scope>
    <source>
        <tissue>Testis</tissue>
    </source>
</reference>
<reference key="3">
    <citation type="journal article" date="2006" name="Nature">
        <title>Analysis of the DNA sequence and duplication history of human chromosome 15.</title>
        <authorList>
            <person name="Zody M.C."/>
            <person name="Garber M."/>
            <person name="Sharpe T."/>
            <person name="Young S.K."/>
            <person name="Rowen L."/>
            <person name="O'Neill K."/>
            <person name="Whittaker C.A."/>
            <person name="Kamal M."/>
            <person name="Chang J.L."/>
            <person name="Cuomo C.A."/>
            <person name="Dewar K."/>
            <person name="FitzGerald M.G."/>
            <person name="Kodira C.D."/>
            <person name="Madan A."/>
            <person name="Qin S."/>
            <person name="Yang X."/>
            <person name="Abbasi N."/>
            <person name="Abouelleil A."/>
            <person name="Arachchi H.M."/>
            <person name="Baradarani L."/>
            <person name="Birditt B."/>
            <person name="Bloom S."/>
            <person name="Bloom T."/>
            <person name="Borowsky M.L."/>
            <person name="Burke J."/>
            <person name="Butler J."/>
            <person name="Cook A."/>
            <person name="DeArellano K."/>
            <person name="DeCaprio D."/>
            <person name="Dorris L. III"/>
            <person name="Dors M."/>
            <person name="Eichler E.E."/>
            <person name="Engels R."/>
            <person name="Fahey J."/>
            <person name="Fleetwood P."/>
            <person name="Friedman C."/>
            <person name="Gearin G."/>
            <person name="Hall J.L."/>
            <person name="Hensley G."/>
            <person name="Johnson E."/>
            <person name="Jones C."/>
            <person name="Kamat A."/>
            <person name="Kaur A."/>
            <person name="Locke D.P."/>
            <person name="Madan A."/>
            <person name="Munson G."/>
            <person name="Jaffe D.B."/>
            <person name="Lui A."/>
            <person name="Macdonald P."/>
            <person name="Mauceli E."/>
            <person name="Naylor J.W."/>
            <person name="Nesbitt R."/>
            <person name="Nicol R."/>
            <person name="O'Leary S.B."/>
            <person name="Ratcliffe A."/>
            <person name="Rounsley S."/>
            <person name="She X."/>
            <person name="Sneddon K.M.B."/>
            <person name="Stewart S."/>
            <person name="Sougnez C."/>
            <person name="Stone S.M."/>
            <person name="Topham K."/>
            <person name="Vincent D."/>
            <person name="Wang S."/>
            <person name="Zimmer A.R."/>
            <person name="Birren B.W."/>
            <person name="Hood L."/>
            <person name="Lander E.S."/>
            <person name="Nusbaum C."/>
        </authorList>
    </citation>
    <scope>NUCLEOTIDE SEQUENCE [LARGE SCALE GENOMIC DNA]</scope>
</reference>
<reference key="4">
    <citation type="journal article" date="2004" name="Genome Res.">
        <title>The status, quality, and expansion of the NIH full-length cDNA project: the Mammalian Gene Collection (MGC).</title>
        <authorList>
            <consortium name="The MGC Project Team"/>
        </authorList>
    </citation>
    <scope>NUCLEOTIDE SEQUENCE [LARGE SCALE MRNA] (ISOFORMS 1 AND 2)</scope>
    <source>
        <tissue>Eye</tissue>
        <tissue>Uterus</tissue>
    </source>
</reference>
<reference key="5">
    <citation type="journal article" date="2008" name="J. Proteome Res.">
        <title>Combining protein-based IMAC, peptide-based IMAC, and MudPIT for efficient phosphoproteomic analysis.</title>
        <authorList>
            <person name="Cantin G.T."/>
            <person name="Yi W."/>
            <person name="Lu B."/>
            <person name="Park S.K."/>
            <person name="Xu T."/>
            <person name="Lee J.-D."/>
            <person name="Yates J.R. III"/>
        </authorList>
    </citation>
    <scope>PHOSPHORYLATION [LARGE SCALE ANALYSIS] AT SER-285</scope>
    <scope>IDENTIFICATION BY MASS SPECTROMETRY [LARGE SCALE ANALYSIS]</scope>
    <source>
        <tissue>Cervix carcinoma</tissue>
    </source>
</reference>
<reference key="6">
    <citation type="journal article" date="2008" name="Proc. Natl. Acad. Sci. U.S.A.">
        <title>A quantitative atlas of mitotic phosphorylation.</title>
        <authorList>
            <person name="Dephoure N."/>
            <person name="Zhou C."/>
            <person name="Villen J."/>
            <person name="Beausoleil S.A."/>
            <person name="Bakalarski C.E."/>
            <person name="Elledge S.J."/>
            <person name="Gygi S.P."/>
        </authorList>
    </citation>
    <scope>PHOSPHORYLATION [LARGE SCALE ANALYSIS] AT SER-285; SER-339; SER-340; SER-484; THR-508; SER-582; SER-585 AND SER-675</scope>
    <scope>IDENTIFICATION BY MASS SPECTROMETRY [LARGE SCALE ANALYSIS]</scope>
    <source>
        <tissue>Cervix carcinoma</tissue>
    </source>
</reference>
<reference key="7">
    <citation type="journal article" date="2009" name="Sci. Signal.">
        <title>Quantitative phosphoproteomic analysis of T cell receptor signaling reveals system-wide modulation of protein-protein interactions.</title>
        <authorList>
            <person name="Mayya V."/>
            <person name="Lundgren D.H."/>
            <person name="Hwang S.-I."/>
            <person name="Rezaul K."/>
            <person name="Wu L."/>
            <person name="Eng J.K."/>
            <person name="Rodionov V."/>
            <person name="Han D.K."/>
        </authorList>
    </citation>
    <scope>PHOSPHORYLATION [LARGE SCALE ANALYSIS] AT SER-285; SER-318 AND THR-323</scope>
    <scope>IDENTIFICATION BY MASS SPECTROMETRY [LARGE SCALE ANALYSIS]</scope>
    <source>
        <tissue>Leukemic T-cell</tissue>
    </source>
</reference>
<reference key="8">
    <citation type="journal article" date="2010" name="Sci. Signal.">
        <title>Quantitative phosphoproteomics reveals widespread full phosphorylation site occupancy during mitosis.</title>
        <authorList>
            <person name="Olsen J.V."/>
            <person name="Vermeulen M."/>
            <person name="Santamaria A."/>
            <person name="Kumar C."/>
            <person name="Miller M.L."/>
            <person name="Jensen L.J."/>
            <person name="Gnad F."/>
            <person name="Cox J."/>
            <person name="Jensen T.S."/>
            <person name="Nigg E.A."/>
            <person name="Brunak S."/>
            <person name="Mann M."/>
        </authorList>
    </citation>
    <scope>PHOSPHORYLATION [LARGE SCALE ANALYSIS] AT SER-316; SER-318; THR-323; SER-484; THR-508; SER-582; SER-585; SER-638; SER-675; SER-847; THR-866 AND SER-868</scope>
    <scope>IDENTIFICATION BY MASS SPECTROMETRY [LARGE SCALE ANALYSIS]</scope>
    <source>
        <tissue>Cervix carcinoma</tissue>
    </source>
</reference>
<reference key="9">
    <citation type="journal article" date="2013" name="J. Proteome Res.">
        <title>Toward a comprehensive characterization of a human cancer cell phosphoproteome.</title>
        <authorList>
            <person name="Zhou H."/>
            <person name="Di Palma S."/>
            <person name="Preisinger C."/>
            <person name="Peng M."/>
            <person name="Polat A.N."/>
            <person name="Heck A.J."/>
            <person name="Mohammed S."/>
        </authorList>
    </citation>
    <scope>PHOSPHORYLATION [LARGE SCALE ANALYSIS] AT SER-285; THR-306; SER-318; THR-323; SER-484; THR-508; SER-585; SER-675; SER-847 AND SER-868</scope>
    <scope>IDENTIFICATION BY MASS SPECTROMETRY [LARGE SCALE ANALYSIS]</scope>
    <source>
        <tissue>Cervix carcinoma</tissue>
        <tissue>Erythroleukemia</tissue>
    </source>
</reference>
<reference key="10">
    <citation type="submission" date="2009-02" db="PDB data bank">
        <title>Crystal structure of the Rho-GAP domain of ARHGAP11A.</title>
        <authorList>
            <consortium name="Structural genomics consortium (SGC)"/>
        </authorList>
    </citation>
    <scope>X-RAY CRYSTALLOGRAPHY (2.3 ANGSTROMS) OF 1-253</scope>
</reference>
<reference key="11">
    <citation type="journal article" date="2006" name="Science">
        <title>The consensus coding sequences of human breast and colorectal cancers.</title>
        <authorList>
            <person name="Sjoeblom T."/>
            <person name="Jones S."/>
            <person name="Wood L.D."/>
            <person name="Parsons D.W."/>
            <person name="Lin J."/>
            <person name="Barber T.D."/>
            <person name="Mandelker D."/>
            <person name="Leary R.J."/>
            <person name="Ptak J."/>
            <person name="Silliman N."/>
            <person name="Szabo S."/>
            <person name="Buckhaults P."/>
            <person name="Farrell C."/>
            <person name="Meeh P."/>
            <person name="Markowitz S.D."/>
            <person name="Willis J."/>
            <person name="Dawson D."/>
            <person name="Willson J.K.V."/>
            <person name="Gazdar A.F."/>
            <person name="Hartigan J."/>
            <person name="Wu L."/>
            <person name="Liu C."/>
            <person name="Parmigiani G."/>
            <person name="Park B.H."/>
            <person name="Bachman K.E."/>
            <person name="Papadopoulos N."/>
            <person name="Vogelstein B."/>
            <person name="Kinzler K.W."/>
            <person name="Velculescu V.E."/>
        </authorList>
    </citation>
    <scope>VARIANT [LARGE SCALE ANALYSIS] LYS-605</scope>
</reference>
<reference key="12">
    <citation type="journal article" date="2016" name="Sci. Adv.">
        <title>A single splice site mutation in human-specific ARHGAP11B causes basal progenitor amplification.</title>
        <authorList>
            <person name="Florio M."/>
            <person name="Namba T."/>
            <person name="Paeaebo S."/>
            <person name="Hiller M."/>
            <person name="Huttner W.B."/>
        </authorList>
    </citation>
    <scope>FUNCTION</scope>
</reference>
<reference key="13">
    <citation type="journal article" date="2020" name="Neuron">
        <title>Human-specific ARHGAP11B acts in mitochondria to expand neocortical progenitors by glutaminolysis.</title>
        <authorList>
            <person name="Namba T."/>
            <person name="Doczi J."/>
            <person name="Pinson A."/>
            <person name="Xing L."/>
            <person name="Kalebic N."/>
            <person name="Wilsch-Braeuninger M."/>
            <person name="Long K.R."/>
            <person name="Vaid S."/>
            <person name="Lauer J."/>
            <person name="Bogdanova A."/>
            <person name="Borgonovo B."/>
            <person name="Shevchenko A."/>
            <person name="Keller P."/>
            <person name="Drechsel D."/>
            <person name="Kurzchalia T."/>
            <person name="Wimberger P."/>
            <person name="Chinopoulos C."/>
            <person name="Huttner W.B."/>
        </authorList>
    </citation>
    <scope>SUBCELLULAR LOCATION</scope>
</reference>
<protein>
    <recommendedName>
        <fullName evidence="10">Rho GTPase-activating protein 11A</fullName>
    </recommendedName>
    <alternativeName>
        <fullName evidence="10">Rho-type GTPase-activating protein 11A</fullName>
    </alternativeName>
</protein>
<proteinExistence type="evidence at protein level"/>
<feature type="chain" id="PRO_0000267213" description="Rho GTPase-activating protein 11A">
    <location>
        <begin position="1"/>
        <end position="1023"/>
    </location>
</feature>
<feature type="domain" description="Rho-GAP" evidence="1">
    <location>
        <begin position="49"/>
        <end position="239"/>
    </location>
</feature>
<feature type="region of interest" description="Disordered" evidence="2">
    <location>
        <begin position="567"/>
        <end position="589"/>
    </location>
</feature>
<feature type="region of interest" description="Disordered" evidence="2">
    <location>
        <begin position="714"/>
        <end position="734"/>
    </location>
</feature>
<feature type="region of interest" description="Disordered" evidence="2">
    <location>
        <begin position="999"/>
        <end position="1023"/>
    </location>
</feature>
<feature type="compositionally biased region" description="Basic and acidic residues" evidence="2">
    <location>
        <begin position="721"/>
        <end position="734"/>
    </location>
</feature>
<feature type="site" description="Arginine finger; crucial for GTP hydrolysis by stabilizing the transition state" evidence="1">
    <location>
        <position position="87"/>
    </location>
</feature>
<feature type="modified residue" description="Phosphoserine" evidence="12 13 14 16">
    <location>
        <position position="285"/>
    </location>
</feature>
<feature type="modified residue" description="Phosphothreonine" evidence="16">
    <location>
        <position position="306"/>
    </location>
</feature>
<feature type="modified residue" description="Phosphoserine" evidence="15">
    <location>
        <position position="316"/>
    </location>
</feature>
<feature type="modified residue" description="Phosphoserine" evidence="14 15 16">
    <location>
        <position position="318"/>
    </location>
</feature>
<feature type="modified residue" description="Phosphothreonine" evidence="14 15 16">
    <location>
        <position position="323"/>
    </location>
</feature>
<feature type="modified residue" description="Phosphoserine" evidence="13">
    <location>
        <position position="339"/>
    </location>
</feature>
<feature type="modified residue" description="Phosphoserine" evidence="13">
    <location>
        <position position="340"/>
    </location>
</feature>
<feature type="modified residue" description="Phosphoserine" evidence="13 15 16">
    <location>
        <position position="484"/>
    </location>
</feature>
<feature type="modified residue" description="Phosphothreonine" evidence="13 15 16">
    <location>
        <position position="508"/>
    </location>
</feature>
<feature type="modified residue" description="Phosphoserine" evidence="13 15">
    <location>
        <position position="582"/>
    </location>
</feature>
<feature type="modified residue" description="Phosphoserine" evidence="13 15 16">
    <location>
        <position position="585"/>
    </location>
</feature>
<feature type="modified residue" description="Phosphoserine" evidence="15">
    <location>
        <position position="638"/>
    </location>
</feature>
<feature type="modified residue" description="Phosphoserine" evidence="13 15 16">
    <location>
        <position position="675"/>
    </location>
</feature>
<feature type="modified residue" description="Phosphoserine" evidence="15 16">
    <location>
        <position position="847"/>
    </location>
</feature>
<feature type="modified residue" description="Phosphothreonine" evidence="15">
    <location>
        <position position="866"/>
    </location>
</feature>
<feature type="modified residue" description="Phosphoserine" evidence="15 16">
    <location>
        <position position="868"/>
    </location>
</feature>
<feature type="splice variant" id="VSP_055370" description="In isoform 3." evidence="6">
    <location>
        <begin position="1"/>
        <end position="189"/>
    </location>
</feature>
<feature type="splice variant" id="VSP_054102" description="In isoform 2." evidence="7">
    <original>SEKISK</original>
    <variation>TFTYYC</variation>
    <location>
        <begin position="496"/>
        <end position="501"/>
    </location>
</feature>
<feature type="splice variant" id="VSP_054103" description="In isoform 2." evidence="7">
    <location>
        <begin position="502"/>
        <end position="1023"/>
    </location>
</feature>
<feature type="sequence variant" id="VAR_035546" description="In a breast cancer sample; somatic mutation." evidence="3">
    <original>E</original>
    <variation>K</variation>
    <location>
        <position position="605"/>
    </location>
</feature>
<feature type="helix" evidence="17">
    <location>
        <begin position="4"/>
        <end position="19"/>
    </location>
</feature>
<feature type="helix" evidence="17">
    <location>
        <begin position="51"/>
        <end position="53"/>
    </location>
</feature>
<feature type="strand" evidence="17">
    <location>
        <begin position="56"/>
        <end position="59"/>
    </location>
</feature>
<feature type="turn" evidence="17">
    <location>
        <begin position="60"/>
        <end position="62"/>
    </location>
</feature>
<feature type="strand" evidence="17">
    <location>
        <begin position="63"/>
        <end position="66"/>
    </location>
</feature>
<feature type="helix" evidence="17">
    <location>
        <begin position="67"/>
        <end position="76"/>
    </location>
</feature>
<feature type="helix" evidence="17">
    <location>
        <begin position="77"/>
        <end position="79"/>
    </location>
</feature>
<feature type="helix" evidence="17">
    <location>
        <begin position="92"/>
        <end position="104"/>
    </location>
</feature>
<feature type="helix" evidence="17">
    <location>
        <begin position="114"/>
        <end position="127"/>
    </location>
</feature>
<feature type="strand" evidence="17">
    <location>
        <begin position="128"/>
        <end position="130"/>
    </location>
</feature>
<feature type="helix" evidence="17">
    <location>
        <begin position="135"/>
        <end position="137"/>
    </location>
</feature>
<feature type="helix" evidence="17">
    <location>
        <begin position="138"/>
        <end position="144"/>
    </location>
</feature>
<feature type="helix" evidence="17">
    <location>
        <begin position="149"/>
        <end position="160"/>
    </location>
</feature>
<feature type="helix" evidence="17">
    <location>
        <begin position="165"/>
        <end position="183"/>
    </location>
</feature>
<feature type="helix" evidence="17">
    <location>
        <begin position="185"/>
        <end position="188"/>
    </location>
</feature>
<feature type="helix" evidence="17">
    <location>
        <begin position="192"/>
        <end position="204"/>
    </location>
</feature>
<feature type="helix" evidence="17">
    <location>
        <begin position="215"/>
        <end position="233"/>
    </location>
</feature>
<feature type="helix" evidence="17">
    <location>
        <begin position="235"/>
        <end position="237"/>
    </location>
</feature>
<feature type="helix" evidence="17">
    <location>
        <begin position="243"/>
        <end position="246"/>
    </location>
</feature>
<name>RHGBA_HUMAN</name>
<comment type="function">
    <text evidence="4">GTPase activator for the Rho-type GTPases by converting them to an inactive GDP-bound state.</text>
</comment>
<comment type="subcellular location">
    <subcellularLocation>
        <location evidence="5">Nucleus</location>
    </subcellularLocation>
</comment>
<comment type="alternative products">
    <event type="alternative splicing"/>
    <isoform>
        <id>Q6P4F7-1</id>
        <name>1</name>
        <sequence type="displayed"/>
    </isoform>
    <isoform>
        <id>Q6P4F7-2</id>
        <name>2</name>
        <sequence type="described" ref="VSP_054102 VSP_054103"/>
    </isoform>
    <isoform>
        <id>Q6P4F7-3</id>
        <name>3</name>
        <sequence type="described" ref="VSP_055370"/>
    </isoform>
</comment>
<comment type="sequence caution" evidence="10">
    <conflict type="erroneous initiation">
        <sequence resource="EMBL-CDS" id="BAA13442"/>
    </conflict>
    <text>Extended N-terminus.</text>
</comment>
<dbReference type="EMBL" id="D87717">
    <property type="protein sequence ID" value="BAA13442.2"/>
    <property type="status" value="ALT_INIT"/>
    <property type="molecule type" value="mRNA"/>
</dbReference>
<dbReference type="EMBL" id="AK303025">
    <property type="protein sequence ID" value="BAG64151.1"/>
    <property type="molecule type" value="mRNA"/>
</dbReference>
<dbReference type="EMBL" id="AK316437">
    <property type="protein sequence ID" value="BAH14808.1"/>
    <property type="molecule type" value="mRNA"/>
</dbReference>
<dbReference type="EMBL" id="AC123768">
    <property type="status" value="NOT_ANNOTATED_CDS"/>
    <property type="molecule type" value="Genomic_DNA"/>
</dbReference>
<dbReference type="EMBL" id="BC039563">
    <property type="protein sequence ID" value="AAH39563.1"/>
    <property type="molecule type" value="mRNA"/>
</dbReference>
<dbReference type="EMBL" id="BC063444">
    <property type="protein sequence ID" value="AAH63444.1"/>
    <property type="molecule type" value="mRNA"/>
</dbReference>
<dbReference type="CCDS" id="CCDS10028.1">
    <molecule id="Q6P4F7-1"/>
</dbReference>
<dbReference type="CCDS" id="CCDS58349.1">
    <molecule id="Q6P4F7-2"/>
</dbReference>
<dbReference type="CCDS" id="CCDS66730.1">
    <molecule id="Q6P4F7-3"/>
</dbReference>
<dbReference type="PIR" id="A59431">
    <property type="entry name" value="A59431"/>
</dbReference>
<dbReference type="RefSeq" id="NP_001273408.1">
    <molecule id="Q6P4F7-3"/>
    <property type="nucleotide sequence ID" value="NM_001286479.3"/>
</dbReference>
<dbReference type="RefSeq" id="NP_001273409.1">
    <molecule id="Q6P4F7-3"/>
    <property type="nucleotide sequence ID" value="NM_001286480.3"/>
</dbReference>
<dbReference type="RefSeq" id="NP_055598.1">
    <molecule id="Q6P4F7-1"/>
    <property type="nucleotide sequence ID" value="NM_014783.6"/>
</dbReference>
<dbReference type="RefSeq" id="NP_955389.1">
    <molecule id="Q6P4F7-2"/>
    <property type="nucleotide sequence ID" value="NM_199357.3"/>
</dbReference>
<dbReference type="PDB" id="3EAP">
    <property type="method" value="X-ray"/>
    <property type="resolution" value="2.30 A"/>
    <property type="chains" value="A/B/C/D=1-253"/>
</dbReference>
<dbReference type="PDBsum" id="3EAP"/>
<dbReference type="SMR" id="Q6P4F7"/>
<dbReference type="BioGRID" id="115162">
    <property type="interactions" value="77"/>
</dbReference>
<dbReference type="FunCoup" id="Q6P4F7">
    <property type="interactions" value="2968"/>
</dbReference>
<dbReference type="IntAct" id="Q6P4F7">
    <property type="interactions" value="59"/>
</dbReference>
<dbReference type="MINT" id="Q6P4F7"/>
<dbReference type="STRING" id="9606.ENSP00000355090"/>
<dbReference type="GlyGen" id="Q6P4F7">
    <property type="glycosylation" value="3 sites, 1 N-linked glycan (1 site), 1 O-linked glycan (1 site)"/>
</dbReference>
<dbReference type="iPTMnet" id="Q6P4F7"/>
<dbReference type="PhosphoSitePlus" id="Q6P4F7"/>
<dbReference type="BioMuta" id="ARHGAP11A"/>
<dbReference type="DMDM" id="119361641"/>
<dbReference type="jPOST" id="Q6P4F7"/>
<dbReference type="MassIVE" id="Q6P4F7"/>
<dbReference type="PaxDb" id="9606-ENSP00000355090"/>
<dbReference type="PeptideAtlas" id="Q6P4F7"/>
<dbReference type="ProteomicsDB" id="5612"/>
<dbReference type="ProteomicsDB" id="66975">
    <molecule id="Q6P4F7-1"/>
</dbReference>
<dbReference type="Pumba" id="Q6P4F7"/>
<dbReference type="Antibodypedia" id="51650">
    <property type="antibodies" value="87 antibodies from 19 providers"/>
</dbReference>
<dbReference type="DNASU" id="9824"/>
<dbReference type="Ensembl" id="ENST00000361627.8">
    <molecule id="Q6P4F7-1"/>
    <property type="protein sequence ID" value="ENSP00000355090.3"/>
    <property type="gene ID" value="ENSG00000198826.11"/>
</dbReference>
<dbReference type="Ensembl" id="ENST00000543522.5">
    <molecule id="Q6P4F7-3"/>
    <property type="protein sequence ID" value="ENSP00000440073.1"/>
    <property type="gene ID" value="ENSG00000198826.11"/>
</dbReference>
<dbReference type="Ensembl" id="ENST00000565905.5">
    <molecule id="Q6P4F7-3"/>
    <property type="protein sequence ID" value="ENSP00000455754.1"/>
    <property type="gene ID" value="ENSG00000198826.11"/>
</dbReference>
<dbReference type="Ensembl" id="ENST00000567348.5">
    <molecule id="Q6P4F7-2"/>
    <property type="protein sequence ID" value="ENSP00000454575.1"/>
    <property type="gene ID" value="ENSG00000198826.11"/>
</dbReference>
<dbReference type="Ensembl" id="ENST00000611363.1">
    <molecule id="Q6P4F7-3"/>
    <property type="protein sequence ID" value="ENSP00000480085.1"/>
    <property type="gene ID" value="ENSG00000275568.4"/>
</dbReference>
<dbReference type="Ensembl" id="ENST00000619401.4">
    <molecule id="Q6P4F7-1"/>
    <property type="protein sequence ID" value="ENSP00000479117.1"/>
    <property type="gene ID" value="ENSG00000275568.4"/>
</dbReference>
<dbReference type="Ensembl" id="ENST00000622253.4">
    <molecule id="Q6P4F7-3"/>
    <property type="protein sequence ID" value="ENSP00000481011.1"/>
    <property type="gene ID" value="ENSG00000275568.4"/>
</dbReference>
<dbReference type="GeneID" id="9824"/>
<dbReference type="KEGG" id="hsa:9824"/>
<dbReference type="MANE-Select" id="ENST00000361627.8">
    <property type="protein sequence ID" value="ENSP00000355090.3"/>
    <property type="RefSeq nucleotide sequence ID" value="NM_014783.6"/>
    <property type="RefSeq protein sequence ID" value="NP_055598.1"/>
</dbReference>
<dbReference type="UCSC" id="uc001zgw.4">
    <molecule id="Q6P4F7-1"/>
    <property type="organism name" value="human"/>
</dbReference>
<dbReference type="AGR" id="HGNC:15783"/>
<dbReference type="CTD" id="9824"/>
<dbReference type="DisGeNET" id="9824"/>
<dbReference type="GeneCards" id="ARHGAP11A"/>
<dbReference type="HGNC" id="HGNC:15783">
    <property type="gene designation" value="ARHGAP11A"/>
</dbReference>
<dbReference type="HPA" id="ENSG00000198826">
    <property type="expression patterns" value="Tissue enhanced (bone marrow, lymphoid tissue)"/>
</dbReference>
<dbReference type="MalaCards" id="ARHGAP11A"/>
<dbReference type="MIM" id="610589">
    <property type="type" value="gene"/>
</dbReference>
<dbReference type="neXtProt" id="NX_Q6P4F7"/>
<dbReference type="OpenTargets" id="ENSG00000198826"/>
<dbReference type="PharmGKB" id="PA134982615"/>
<dbReference type="VEuPathDB" id="HostDB:ENSG00000198826"/>
<dbReference type="eggNOG" id="KOG2710">
    <property type="taxonomic scope" value="Eukaryota"/>
</dbReference>
<dbReference type="GeneTree" id="ENSGT00940000155312"/>
<dbReference type="HOGENOM" id="CLU_010134_1_0_1"/>
<dbReference type="InParanoid" id="Q6P4F7"/>
<dbReference type="OMA" id="RQPIRHK"/>
<dbReference type="OrthoDB" id="410651at2759"/>
<dbReference type="PAN-GO" id="Q6P4F7">
    <property type="GO annotations" value="1 GO annotation based on evolutionary models"/>
</dbReference>
<dbReference type="PhylomeDB" id="Q6P4F7"/>
<dbReference type="TreeFam" id="TF332212"/>
<dbReference type="PathwayCommons" id="Q6P4F7"/>
<dbReference type="Reactome" id="R-HSA-8980692">
    <property type="pathway name" value="RHOA GTPase cycle"/>
</dbReference>
<dbReference type="SignaLink" id="Q6P4F7"/>
<dbReference type="SIGNOR" id="Q6P4F7"/>
<dbReference type="BioGRID-ORCS" id="9824">
    <property type="hits" value="186 hits in 1153 CRISPR screens"/>
</dbReference>
<dbReference type="ChiTaRS" id="ARHGAP11A">
    <property type="organism name" value="human"/>
</dbReference>
<dbReference type="EvolutionaryTrace" id="Q6P4F7"/>
<dbReference type="GenomeRNAi" id="9824"/>
<dbReference type="Pharos" id="Q6P4F7">
    <property type="development level" value="Tbio"/>
</dbReference>
<dbReference type="PRO" id="PR:Q6P4F7"/>
<dbReference type="Proteomes" id="UP000005640">
    <property type="component" value="Chromosome 15"/>
</dbReference>
<dbReference type="RNAct" id="Q6P4F7">
    <property type="molecule type" value="protein"/>
</dbReference>
<dbReference type="Bgee" id="ENSG00000198826">
    <property type="expression patterns" value="Expressed in ganglionic eminence and 106 other cell types or tissues"/>
</dbReference>
<dbReference type="ExpressionAtlas" id="Q6P4F7">
    <property type="expression patterns" value="baseline and differential"/>
</dbReference>
<dbReference type="GO" id="GO:0005829">
    <property type="term" value="C:cytosol"/>
    <property type="evidence" value="ECO:0000304"/>
    <property type="project" value="Reactome"/>
</dbReference>
<dbReference type="GO" id="GO:0005634">
    <property type="term" value="C:nucleus"/>
    <property type="evidence" value="ECO:0000314"/>
    <property type="project" value="UniProtKB"/>
</dbReference>
<dbReference type="GO" id="GO:0005096">
    <property type="term" value="F:GTPase activator activity"/>
    <property type="evidence" value="ECO:0000314"/>
    <property type="project" value="UniProtKB"/>
</dbReference>
<dbReference type="GO" id="GO:0043547">
    <property type="term" value="P:positive regulation of GTPase activity"/>
    <property type="evidence" value="ECO:0000314"/>
    <property type="project" value="UniProtKB"/>
</dbReference>
<dbReference type="GO" id="GO:0051056">
    <property type="term" value="P:regulation of small GTPase mediated signal transduction"/>
    <property type="evidence" value="ECO:0000304"/>
    <property type="project" value="Reactome"/>
</dbReference>
<dbReference type="GO" id="GO:0007165">
    <property type="term" value="P:signal transduction"/>
    <property type="evidence" value="ECO:0007669"/>
    <property type="project" value="InterPro"/>
</dbReference>
<dbReference type="CDD" id="cd04394">
    <property type="entry name" value="RhoGAP-ARHGAP11A"/>
    <property type="match status" value="1"/>
</dbReference>
<dbReference type="FunFam" id="1.10.555.10:FF:000042">
    <property type="entry name" value="rho GTPase-activating protein 11A isoform X1"/>
    <property type="match status" value="1"/>
</dbReference>
<dbReference type="Gene3D" id="1.10.555.10">
    <property type="entry name" value="Rho GTPase activation protein"/>
    <property type="match status" value="1"/>
</dbReference>
<dbReference type="InterPro" id="IPR042869">
    <property type="entry name" value="ARHGAP11A/B"/>
</dbReference>
<dbReference type="InterPro" id="IPR008936">
    <property type="entry name" value="Rho_GTPase_activation_prot"/>
</dbReference>
<dbReference type="InterPro" id="IPR000198">
    <property type="entry name" value="RhoGAP_dom"/>
</dbReference>
<dbReference type="PANTHER" id="PTHR15670">
    <property type="entry name" value="RHO GTPASE ACTIVATING PROTEIN 11A"/>
    <property type="match status" value="1"/>
</dbReference>
<dbReference type="PANTHER" id="PTHR15670:SF4">
    <property type="entry name" value="RHO GTPASE-ACTIVATING PROTEIN 11A"/>
    <property type="match status" value="1"/>
</dbReference>
<dbReference type="Pfam" id="PF00620">
    <property type="entry name" value="RhoGAP"/>
    <property type="match status" value="1"/>
</dbReference>
<dbReference type="SMART" id="SM00324">
    <property type="entry name" value="RhoGAP"/>
    <property type="match status" value="1"/>
</dbReference>
<dbReference type="SUPFAM" id="SSF48350">
    <property type="entry name" value="GTPase activation domain, GAP"/>
    <property type="match status" value="1"/>
</dbReference>
<dbReference type="PROSITE" id="PS50238">
    <property type="entry name" value="RHOGAP"/>
    <property type="match status" value="1"/>
</dbReference>
<organism>
    <name type="scientific">Homo sapiens</name>
    <name type="common">Human</name>
    <dbReference type="NCBI Taxonomy" id="9606"/>
    <lineage>
        <taxon>Eukaryota</taxon>
        <taxon>Metazoa</taxon>
        <taxon>Chordata</taxon>
        <taxon>Craniata</taxon>
        <taxon>Vertebrata</taxon>
        <taxon>Euteleostomi</taxon>
        <taxon>Mammalia</taxon>
        <taxon>Eutheria</taxon>
        <taxon>Euarchontoglires</taxon>
        <taxon>Primates</taxon>
        <taxon>Haplorrhini</taxon>
        <taxon>Catarrhini</taxon>
        <taxon>Hominidae</taxon>
        <taxon>Homo</taxon>
    </lineage>
</organism>
<evidence type="ECO:0000255" key="1">
    <source>
        <dbReference type="PROSITE-ProRule" id="PRU00172"/>
    </source>
</evidence>
<evidence type="ECO:0000256" key="2">
    <source>
        <dbReference type="SAM" id="MobiDB-lite"/>
    </source>
</evidence>
<evidence type="ECO:0000269" key="3">
    <source>
    </source>
</evidence>
<evidence type="ECO:0000269" key="4">
    <source>
    </source>
</evidence>
<evidence type="ECO:0000269" key="5">
    <source>
    </source>
</evidence>
<evidence type="ECO:0000303" key="6">
    <source>
    </source>
</evidence>
<evidence type="ECO:0000303" key="7">
    <source>
    </source>
</evidence>
<evidence type="ECO:0000303" key="8">
    <source>
    </source>
</evidence>
<evidence type="ECO:0000303" key="9">
    <source>
    </source>
</evidence>
<evidence type="ECO:0000305" key="10"/>
<evidence type="ECO:0000312" key="11">
    <source>
        <dbReference type="HGNC" id="HGNC:15783"/>
    </source>
</evidence>
<evidence type="ECO:0007744" key="12">
    <source>
    </source>
</evidence>
<evidence type="ECO:0007744" key="13">
    <source>
    </source>
</evidence>
<evidence type="ECO:0007744" key="14">
    <source>
    </source>
</evidence>
<evidence type="ECO:0007744" key="15">
    <source>
    </source>
</evidence>
<evidence type="ECO:0007744" key="16">
    <source>
    </source>
</evidence>
<evidence type="ECO:0007829" key="17">
    <source>
        <dbReference type="PDB" id="3EAP"/>
    </source>
</evidence>
<sequence>MWDQRLVRLALLQHLRAFYGIKVKGVRGQCDRRRHETAATEIGGKIFGVPFNALPHSAVPEYGHIPSFLVDACTSLEDHIHTEGLFRKSGSVIRLKALKNKVDHGEGCLSSAPPCDIAGLLKQFFRELPEPILPADLHEALLKAQQLGTEEKNKATLLLSCLLADHTVHVLRYFFNFLRNVSLRSSENKMDSSNLAVIFAPNLLQTSEGHEKMSSNTEKKLRLQAAVVQTLIDYASDIGRVPDFILEKIPAMLGIDGLCATPSLEGFEEGEYETPGEYKRKRRQSVGDFVSGALNKFKPNRTPSITPQEERIAQLSESPVILTPNAKRTLPVDSSHGFSSKKRKSIKHNFNFELLPSNLFNSSSTPVSVHIDTSSEGSSQSSLSPVLIGGNHLITAGVPRRSKRIAGKKVCRVESGKAGCFSPKISHKEKVRRSLRLKFNLGKNGREVNGCSGVNRYESVGWRLANQQSLKNRIESVKTGLLFSPDVDEKLPKKGSEKISKSEETLLTPERLVGTNYRMSWTGPNNSSFQEVDANEASSMVENLEVENSLEPDIMVEKSPATSCELTPSNLNNKHNSNITSSPLSGDENNMTKETLVKVQKAFSESGSNLHALMNQRQSSVTNVGKVKLTEPSYLEDSPEENLFETNDLTIVESKEKYEHHTGKGEKCFSERDFSPLQTQTFNRETTIKCYSTQMKMEHEKDIHSNMPKDYLSKQEFSSDEEIKKQQSPKDKLNNKLKENENMMEGNLPKCAAHSKDEARSSFSQQSTCVVTNLSKPRPMRIAKQQSLETCEKTVSESSQMTEHRKVSDHIQWFNKLSLNEPNRIKVKSPLKFQRTPVRQSVRRINSLLEYSRQPTGHKLASLGDTASPLVKSVSCDGALSSCIESASKDSSVSCIKSGPKEQKSMSCEESNIGAISKSSMELPSKSFLKMRKHPDSVNASLRSTTVYKQKILSDGQVKVPLDDLTNHDIVKPVVNNNMGISSGINNRVLRRPSERGRAWYKGSPKHPIGKTQLLPTSKPVDL</sequence>
<gene>
    <name evidence="8 11" type="primary">ARHGAP11A</name>
    <name evidence="9" type="synonym">KIAA0013</name>
</gene>
<accession>Q6P4F7</accession>
<accession>B4DZN9</accession>
<accession>Q6PI96</accession>
<accession>Q9Y3S6</accession>
<keyword id="KW-0002">3D-structure</keyword>
<keyword id="KW-0025">Alternative splicing</keyword>
<keyword id="KW-0343">GTPase activation</keyword>
<keyword id="KW-0539">Nucleus</keyword>
<keyword id="KW-0597">Phosphoprotein</keyword>
<keyword id="KW-1267">Proteomics identification</keyword>
<keyword id="KW-1185">Reference proteome</keyword>